<proteinExistence type="inferred from homology"/>
<feature type="chain" id="PRO_1000082115" description="Succinate--CoA ligase [ADP-forming] subunit beta">
    <location>
        <begin position="1"/>
        <end position="387"/>
    </location>
</feature>
<feature type="domain" description="ATP-grasp" evidence="1">
    <location>
        <begin position="9"/>
        <end position="236"/>
    </location>
</feature>
<feature type="binding site" evidence="1">
    <location>
        <position position="45"/>
    </location>
    <ligand>
        <name>ATP</name>
        <dbReference type="ChEBI" id="CHEBI:30616"/>
    </ligand>
</feature>
<feature type="binding site" evidence="1">
    <location>
        <begin position="52"/>
        <end position="54"/>
    </location>
    <ligand>
        <name>ATP</name>
        <dbReference type="ChEBI" id="CHEBI:30616"/>
    </ligand>
</feature>
<feature type="binding site" evidence="1">
    <location>
        <position position="94"/>
    </location>
    <ligand>
        <name>ATP</name>
        <dbReference type="ChEBI" id="CHEBI:30616"/>
    </ligand>
</feature>
<feature type="binding site" evidence="1">
    <location>
        <position position="99"/>
    </location>
    <ligand>
        <name>ATP</name>
        <dbReference type="ChEBI" id="CHEBI:30616"/>
    </ligand>
</feature>
<feature type="binding site" evidence="1">
    <location>
        <position position="191"/>
    </location>
    <ligand>
        <name>Mg(2+)</name>
        <dbReference type="ChEBI" id="CHEBI:18420"/>
    </ligand>
</feature>
<feature type="binding site" evidence="1">
    <location>
        <position position="205"/>
    </location>
    <ligand>
        <name>Mg(2+)</name>
        <dbReference type="ChEBI" id="CHEBI:18420"/>
    </ligand>
</feature>
<feature type="binding site" evidence="1">
    <location>
        <position position="256"/>
    </location>
    <ligand>
        <name>substrate</name>
        <note>ligand shared with subunit alpha</note>
    </ligand>
</feature>
<feature type="binding site" evidence="1">
    <location>
        <begin position="318"/>
        <end position="320"/>
    </location>
    <ligand>
        <name>substrate</name>
        <note>ligand shared with subunit alpha</note>
    </ligand>
</feature>
<reference key="1">
    <citation type="journal article" date="2004" name="Mol. Plant Microbe Interact.">
        <title>The genome sequence of the Gram-positive sugarcane pathogen Leifsonia xyli subsp. xyli.</title>
        <authorList>
            <person name="Monteiro-Vitorello C.B."/>
            <person name="Camargo L.E.A."/>
            <person name="Van Sluys M.A."/>
            <person name="Kitajima J.P."/>
            <person name="Truffi D."/>
            <person name="do Amaral A.M."/>
            <person name="Harakava R."/>
            <person name="de Oliveira J.C.F."/>
            <person name="Wood D."/>
            <person name="de Oliveira M.C."/>
            <person name="Miyaki C.Y."/>
            <person name="Takita M.A."/>
            <person name="da Silva A.C.R."/>
            <person name="Furlan L.R."/>
            <person name="Carraro D.M."/>
            <person name="Camarotte G."/>
            <person name="Almeida N.F. Jr."/>
            <person name="Carrer H."/>
            <person name="Coutinho L.L."/>
            <person name="El-Dorry H.A."/>
            <person name="Ferro M.I.T."/>
            <person name="Gagliardi P.R."/>
            <person name="Giglioti E."/>
            <person name="Goldman M.H.S."/>
            <person name="Goldman G.H."/>
            <person name="Kimura E.T."/>
            <person name="Ferro E.S."/>
            <person name="Kuramae E.E."/>
            <person name="Lemos E.G.M."/>
            <person name="Lemos M.V.F."/>
            <person name="Mauro S.M.Z."/>
            <person name="Machado M.A."/>
            <person name="Marino C.L."/>
            <person name="Menck C.F."/>
            <person name="Nunes L.R."/>
            <person name="Oliveira R.C."/>
            <person name="Pereira G.G."/>
            <person name="Siqueira W."/>
            <person name="de Souza A.A."/>
            <person name="Tsai S.M."/>
            <person name="Zanca A.S."/>
            <person name="Simpson A.J.G."/>
            <person name="Brumbley S.M."/>
            <person name="Setubal J.C."/>
        </authorList>
    </citation>
    <scope>NUCLEOTIDE SEQUENCE [LARGE SCALE GENOMIC DNA]</scope>
    <source>
        <strain>CTCB07</strain>
    </source>
</reference>
<accession>Q6AD57</accession>
<organism>
    <name type="scientific">Leifsonia xyli subsp. xyli (strain CTCB07)</name>
    <dbReference type="NCBI Taxonomy" id="281090"/>
    <lineage>
        <taxon>Bacteria</taxon>
        <taxon>Bacillati</taxon>
        <taxon>Actinomycetota</taxon>
        <taxon>Actinomycetes</taxon>
        <taxon>Micrococcales</taxon>
        <taxon>Microbacteriaceae</taxon>
        <taxon>Leifsonia</taxon>
    </lineage>
</organism>
<dbReference type="EC" id="6.2.1.5" evidence="1"/>
<dbReference type="EMBL" id="AE016822">
    <property type="protein sequence ID" value="AAT89687.1"/>
    <property type="molecule type" value="Genomic_DNA"/>
</dbReference>
<dbReference type="RefSeq" id="WP_011186673.1">
    <property type="nucleotide sequence ID" value="NC_006087.1"/>
</dbReference>
<dbReference type="SMR" id="Q6AD57"/>
<dbReference type="STRING" id="281090.Lxx19720"/>
<dbReference type="KEGG" id="lxx:Lxx19720"/>
<dbReference type="eggNOG" id="COG0045">
    <property type="taxonomic scope" value="Bacteria"/>
</dbReference>
<dbReference type="HOGENOM" id="CLU_037430_0_2_11"/>
<dbReference type="UniPathway" id="UPA00223">
    <property type="reaction ID" value="UER00999"/>
</dbReference>
<dbReference type="Proteomes" id="UP000001306">
    <property type="component" value="Chromosome"/>
</dbReference>
<dbReference type="GO" id="GO:0005829">
    <property type="term" value="C:cytosol"/>
    <property type="evidence" value="ECO:0007669"/>
    <property type="project" value="TreeGrafter"/>
</dbReference>
<dbReference type="GO" id="GO:0042709">
    <property type="term" value="C:succinate-CoA ligase complex"/>
    <property type="evidence" value="ECO:0007669"/>
    <property type="project" value="TreeGrafter"/>
</dbReference>
<dbReference type="GO" id="GO:0005524">
    <property type="term" value="F:ATP binding"/>
    <property type="evidence" value="ECO:0007669"/>
    <property type="project" value="UniProtKB-UniRule"/>
</dbReference>
<dbReference type="GO" id="GO:0000287">
    <property type="term" value="F:magnesium ion binding"/>
    <property type="evidence" value="ECO:0007669"/>
    <property type="project" value="UniProtKB-UniRule"/>
</dbReference>
<dbReference type="GO" id="GO:0004775">
    <property type="term" value="F:succinate-CoA ligase (ADP-forming) activity"/>
    <property type="evidence" value="ECO:0007669"/>
    <property type="project" value="UniProtKB-UniRule"/>
</dbReference>
<dbReference type="GO" id="GO:0004776">
    <property type="term" value="F:succinate-CoA ligase (GDP-forming) activity"/>
    <property type="evidence" value="ECO:0007669"/>
    <property type="project" value="RHEA"/>
</dbReference>
<dbReference type="GO" id="GO:0006104">
    <property type="term" value="P:succinyl-CoA metabolic process"/>
    <property type="evidence" value="ECO:0007669"/>
    <property type="project" value="TreeGrafter"/>
</dbReference>
<dbReference type="GO" id="GO:0006099">
    <property type="term" value="P:tricarboxylic acid cycle"/>
    <property type="evidence" value="ECO:0007669"/>
    <property type="project" value="UniProtKB-UniRule"/>
</dbReference>
<dbReference type="FunFam" id="3.30.1490.20:FF:000014">
    <property type="entry name" value="Succinate--CoA ligase [ADP-forming] subunit beta"/>
    <property type="match status" value="1"/>
</dbReference>
<dbReference type="FunFam" id="3.30.470.20:FF:000002">
    <property type="entry name" value="Succinate--CoA ligase [ADP-forming] subunit beta"/>
    <property type="match status" value="1"/>
</dbReference>
<dbReference type="FunFam" id="3.40.50.261:FF:000007">
    <property type="entry name" value="Succinate--CoA ligase [ADP-forming] subunit beta"/>
    <property type="match status" value="1"/>
</dbReference>
<dbReference type="Gene3D" id="3.30.1490.20">
    <property type="entry name" value="ATP-grasp fold, A domain"/>
    <property type="match status" value="1"/>
</dbReference>
<dbReference type="Gene3D" id="3.30.470.20">
    <property type="entry name" value="ATP-grasp fold, B domain"/>
    <property type="match status" value="1"/>
</dbReference>
<dbReference type="Gene3D" id="3.40.50.261">
    <property type="entry name" value="Succinyl-CoA synthetase domains"/>
    <property type="match status" value="1"/>
</dbReference>
<dbReference type="HAMAP" id="MF_00558">
    <property type="entry name" value="Succ_CoA_beta"/>
    <property type="match status" value="1"/>
</dbReference>
<dbReference type="InterPro" id="IPR011761">
    <property type="entry name" value="ATP-grasp"/>
</dbReference>
<dbReference type="InterPro" id="IPR013650">
    <property type="entry name" value="ATP-grasp_succ-CoA_synth-type"/>
</dbReference>
<dbReference type="InterPro" id="IPR013815">
    <property type="entry name" value="ATP_grasp_subdomain_1"/>
</dbReference>
<dbReference type="InterPro" id="IPR017866">
    <property type="entry name" value="Succ-CoA_synthase_bsu_CS"/>
</dbReference>
<dbReference type="InterPro" id="IPR005811">
    <property type="entry name" value="SUCC_ACL_C"/>
</dbReference>
<dbReference type="InterPro" id="IPR005809">
    <property type="entry name" value="Succ_CoA_ligase-like_bsu"/>
</dbReference>
<dbReference type="InterPro" id="IPR016102">
    <property type="entry name" value="Succinyl-CoA_synth-like"/>
</dbReference>
<dbReference type="NCBIfam" id="NF001913">
    <property type="entry name" value="PRK00696.1"/>
    <property type="match status" value="1"/>
</dbReference>
<dbReference type="NCBIfam" id="TIGR01016">
    <property type="entry name" value="sucCoAbeta"/>
    <property type="match status" value="1"/>
</dbReference>
<dbReference type="PANTHER" id="PTHR11815:SF10">
    <property type="entry name" value="SUCCINATE--COA LIGASE [GDP-FORMING] SUBUNIT BETA, MITOCHONDRIAL"/>
    <property type="match status" value="1"/>
</dbReference>
<dbReference type="PANTHER" id="PTHR11815">
    <property type="entry name" value="SUCCINYL-COA SYNTHETASE BETA CHAIN"/>
    <property type="match status" value="1"/>
</dbReference>
<dbReference type="Pfam" id="PF08442">
    <property type="entry name" value="ATP-grasp_2"/>
    <property type="match status" value="1"/>
</dbReference>
<dbReference type="Pfam" id="PF00549">
    <property type="entry name" value="Ligase_CoA"/>
    <property type="match status" value="1"/>
</dbReference>
<dbReference type="PIRSF" id="PIRSF001554">
    <property type="entry name" value="SucCS_beta"/>
    <property type="match status" value="1"/>
</dbReference>
<dbReference type="SUPFAM" id="SSF56059">
    <property type="entry name" value="Glutathione synthetase ATP-binding domain-like"/>
    <property type="match status" value="1"/>
</dbReference>
<dbReference type="SUPFAM" id="SSF52210">
    <property type="entry name" value="Succinyl-CoA synthetase domains"/>
    <property type="match status" value="1"/>
</dbReference>
<dbReference type="PROSITE" id="PS50975">
    <property type="entry name" value="ATP_GRASP"/>
    <property type="match status" value="1"/>
</dbReference>
<dbReference type="PROSITE" id="PS01217">
    <property type="entry name" value="SUCCINYL_COA_LIG_3"/>
    <property type="match status" value="1"/>
</dbReference>
<protein>
    <recommendedName>
        <fullName evidence="1">Succinate--CoA ligase [ADP-forming] subunit beta</fullName>
        <ecNumber evidence="1">6.2.1.5</ecNumber>
    </recommendedName>
    <alternativeName>
        <fullName evidence="1">Succinyl-CoA synthetase subunit beta</fullName>
        <shortName evidence="1">SCS-beta</shortName>
    </alternativeName>
</protein>
<gene>
    <name evidence="1" type="primary">sucC</name>
    <name type="ordered locus">Lxx19720</name>
</gene>
<comment type="function">
    <text evidence="1">Succinyl-CoA synthetase functions in the citric acid cycle (TCA), coupling the hydrolysis of succinyl-CoA to the synthesis of either ATP or GTP and thus represents the only step of substrate-level phosphorylation in the TCA. The beta subunit provides nucleotide specificity of the enzyme and binds the substrate succinate, while the binding sites for coenzyme A and phosphate are found in the alpha subunit.</text>
</comment>
<comment type="catalytic activity">
    <reaction evidence="1">
        <text>succinate + ATP + CoA = succinyl-CoA + ADP + phosphate</text>
        <dbReference type="Rhea" id="RHEA:17661"/>
        <dbReference type="ChEBI" id="CHEBI:30031"/>
        <dbReference type="ChEBI" id="CHEBI:30616"/>
        <dbReference type="ChEBI" id="CHEBI:43474"/>
        <dbReference type="ChEBI" id="CHEBI:57287"/>
        <dbReference type="ChEBI" id="CHEBI:57292"/>
        <dbReference type="ChEBI" id="CHEBI:456216"/>
        <dbReference type="EC" id="6.2.1.5"/>
    </reaction>
    <physiologicalReaction direction="right-to-left" evidence="1">
        <dbReference type="Rhea" id="RHEA:17663"/>
    </physiologicalReaction>
</comment>
<comment type="catalytic activity">
    <reaction evidence="1">
        <text>GTP + succinate + CoA = succinyl-CoA + GDP + phosphate</text>
        <dbReference type="Rhea" id="RHEA:22120"/>
        <dbReference type="ChEBI" id="CHEBI:30031"/>
        <dbReference type="ChEBI" id="CHEBI:37565"/>
        <dbReference type="ChEBI" id="CHEBI:43474"/>
        <dbReference type="ChEBI" id="CHEBI:57287"/>
        <dbReference type="ChEBI" id="CHEBI:57292"/>
        <dbReference type="ChEBI" id="CHEBI:58189"/>
    </reaction>
    <physiologicalReaction direction="right-to-left" evidence="1">
        <dbReference type="Rhea" id="RHEA:22122"/>
    </physiologicalReaction>
</comment>
<comment type="cofactor">
    <cofactor evidence="1">
        <name>Mg(2+)</name>
        <dbReference type="ChEBI" id="CHEBI:18420"/>
    </cofactor>
    <text evidence="1">Binds 1 Mg(2+) ion per subunit.</text>
</comment>
<comment type="pathway">
    <text evidence="1">Carbohydrate metabolism; tricarboxylic acid cycle; succinate from succinyl-CoA (ligase route): step 1/1.</text>
</comment>
<comment type="subunit">
    <text evidence="1">Heterotetramer of two alpha and two beta subunits.</text>
</comment>
<comment type="similarity">
    <text evidence="1">Belongs to the succinate/malate CoA ligase beta subunit family.</text>
</comment>
<keyword id="KW-0067">ATP-binding</keyword>
<keyword id="KW-0436">Ligase</keyword>
<keyword id="KW-0460">Magnesium</keyword>
<keyword id="KW-0479">Metal-binding</keyword>
<keyword id="KW-0547">Nucleotide-binding</keyword>
<keyword id="KW-1185">Reference proteome</keyword>
<keyword id="KW-0816">Tricarboxylic acid cycle</keyword>
<name>SUCC_LEIXX</name>
<sequence length="387" mass="40789">MDLYEYQARDLFEKYGVPVLPGIVADTPEEVRAAAEKLGGVNVVKAQVKTGGRGKVGGVKVAKNPDEAEEAAKAILGLDIKGHVVRRVMVSGGARIAREFYFSVLLDRANRSYLSLTSVEGGMEIEQLAVEKPEALARIGVDPIAGVDTTKATEIARAAGFPEELVSKVADVFVKLYDVYKGEDATLVEVNPLVLTEEGEVIALDGKVTLDENAGFRHPEHEELEDKAAADPLEAKAKEADLNYVKLDGQVGIIGNGAGLVMSTLDVVAYAGERHKGVKPANFLDIGGGASAEVMAAGLDVILNDPQVKSVFVNVFGGITACDAVANGIVKALEILGGDANKPLVVRLDGNNVEEGRRILTDANHPLVTLALTMDEGADKAAELAAK</sequence>
<evidence type="ECO:0000255" key="1">
    <source>
        <dbReference type="HAMAP-Rule" id="MF_00558"/>
    </source>
</evidence>